<name>PURL_NITSB</name>
<feature type="chain" id="PRO_1000050328" description="Phosphoribosylformylglycinamidine synthase subunit PurL">
    <location>
        <begin position="1"/>
        <end position="735"/>
    </location>
</feature>
<feature type="active site" evidence="1">
    <location>
        <position position="44"/>
    </location>
</feature>
<feature type="active site" description="Proton acceptor" evidence="1">
    <location>
        <position position="90"/>
    </location>
</feature>
<feature type="binding site" evidence="1">
    <location>
        <position position="47"/>
    </location>
    <ligand>
        <name>ATP</name>
        <dbReference type="ChEBI" id="CHEBI:30616"/>
    </ligand>
</feature>
<feature type="binding site" evidence="1">
    <location>
        <position position="86"/>
    </location>
    <ligand>
        <name>ATP</name>
        <dbReference type="ChEBI" id="CHEBI:30616"/>
    </ligand>
</feature>
<feature type="binding site" evidence="1">
    <location>
        <position position="88"/>
    </location>
    <ligand>
        <name>Mg(2+)</name>
        <dbReference type="ChEBI" id="CHEBI:18420"/>
        <label>1</label>
    </ligand>
</feature>
<feature type="binding site" evidence="1">
    <location>
        <begin position="89"/>
        <end position="92"/>
    </location>
    <ligand>
        <name>substrate</name>
    </ligand>
</feature>
<feature type="binding site" evidence="1">
    <location>
        <position position="111"/>
    </location>
    <ligand>
        <name>substrate</name>
    </ligand>
</feature>
<feature type="binding site" evidence="1">
    <location>
        <position position="112"/>
    </location>
    <ligand>
        <name>Mg(2+)</name>
        <dbReference type="ChEBI" id="CHEBI:18420"/>
        <label>2</label>
    </ligand>
</feature>
<feature type="binding site" evidence="1">
    <location>
        <position position="240"/>
    </location>
    <ligand>
        <name>substrate</name>
    </ligand>
</feature>
<feature type="binding site" evidence="1">
    <location>
        <position position="268"/>
    </location>
    <ligand>
        <name>Mg(2+)</name>
        <dbReference type="ChEBI" id="CHEBI:18420"/>
        <label>2</label>
    </ligand>
</feature>
<feature type="binding site" evidence="1">
    <location>
        <begin position="312"/>
        <end position="314"/>
    </location>
    <ligand>
        <name>substrate</name>
    </ligand>
</feature>
<feature type="binding site" evidence="1">
    <location>
        <position position="496"/>
    </location>
    <ligand>
        <name>ATP</name>
        <dbReference type="ChEBI" id="CHEBI:30616"/>
    </ligand>
</feature>
<feature type="binding site" evidence="1">
    <location>
        <position position="533"/>
    </location>
    <ligand>
        <name>ATP</name>
        <dbReference type="ChEBI" id="CHEBI:30616"/>
    </ligand>
</feature>
<feature type="binding site" evidence="1">
    <location>
        <position position="534"/>
    </location>
    <ligand>
        <name>Mg(2+)</name>
        <dbReference type="ChEBI" id="CHEBI:18420"/>
        <label>1</label>
    </ligand>
</feature>
<feature type="binding site" evidence="1">
    <location>
        <position position="536"/>
    </location>
    <ligand>
        <name>substrate</name>
    </ligand>
</feature>
<sequence length="735" mass="80676">MENIEEILKAHKLTMEDYEHIKKILGREPNLVEIGIFSAMWSEHCSYKSSKKYLKGFPTEAPWVIQGPGENAGVIDIGDGMAAVFKMESHNHPSFIEPYQGAATGVGGILRDVFTMGARPVANLNALRFGDVKREDEVGAHQRYLVRGVVAGIGGYGNCVGVPTIGGEVSFDECYNGNILVNAFSLGICKKDEIFYGRAEGVGNPVIYVGSKTGRDGLGGAVMSSDSFTEETKKLRPTVQVGDPFTEKLLLEACLELFKTDYVVGIQDMGAAGLTSSSFEMAGRAGSGMKMYLDKVPMREEGMTPYELMLSESQERMLICAKKGTEEKVLEIFRKWDLDAEIIGEVTDTGVMELYWHGEKVAEVPVAPVSEEAPELDRPTKRPEYLAYIKETSIDTVPHVEDQEAFEKLLGSLEVVNKAWVYEQYDSMVQTNTVKHPGTLDASVIRVKENGKAIAMSSKCNPRYCYIDPKGGAAAAVMAAGRNVAMSGARPLAITDCLNYGNPENPEVMWQFAQGTEGIKEACRALNTPVVSGNVSLYNETNGVSVYPTPTIAMVGLNDDANKVVPSYFQETNDVVYIIGDTEKEFGGSLYLKELFGKVAGELPKIDYEKELRLWNFVIEANNRGLLKAAKDVGVGGIAIALAKMAALGNKGFLGNFCFEDSREIFSETFSRALVEIDPKNMHALEELANEIGIHATPLGTVGGNRFQLCDIDMEMEKLKDIYFNTFKREIERDL</sequence>
<evidence type="ECO:0000255" key="1">
    <source>
        <dbReference type="HAMAP-Rule" id="MF_00420"/>
    </source>
</evidence>
<dbReference type="EC" id="6.3.5.3" evidence="1"/>
<dbReference type="EMBL" id="AP009178">
    <property type="protein sequence ID" value="BAF70007.1"/>
    <property type="molecule type" value="Genomic_DNA"/>
</dbReference>
<dbReference type="RefSeq" id="WP_012082270.1">
    <property type="nucleotide sequence ID" value="NC_009662.1"/>
</dbReference>
<dbReference type="SMR" id="A6Q3E8"/>
<dbReference type="FunCoup" id="A6Q3E8">
    <property type="interactions" value="427"/>
</dbReference>
<dbReference type="STRING" id="387092.NIS_0895"/>
<dbReference type="KEGG" id="nis:NIS_0895"/>
<dbReference type="eggNOG" id="COG0046">
    <property type="taxonomic scope" value="Bacteria"/>
</dbReference>
<dbReference type="HOGENOM" id="CLU_003100_0_1_7"/>
<dbReference type="InParanoid" id="A6Q3E8"/>
<dbReference type="OrthoDB" id="9804441at2"/>
<dbReference type="UniPathway" id="UPA00074">
    <property type="reaction ID" value="UER00128"/>
</dbReference>
<dbReference type="Proteomes" id="UP000001118">
    <property type="component" value="Chromosome"/>
</dbReference>
<dbReference type="GO" id="GO:0005737">
    <property type="term" value="C:cytoplasm"/>
    <property type="evidence" value="ECO:0007669"/>
    <property type="project" value="UniProtKB-SubCell"/>
</dbReference>
<dbReference type="GO" id="GO:0005524">
    <property type="term" value="F:ATP binding"/>
    <property type="evidence" value="ECO:0007669"/>
    <property type="project" value="UniProtKB-UniRule"/>
</dbReference>
<dbReference type="GO" id="GO:0000287">
    <property type="term" value="F:magnesium ion binding"/>
    <property type="evidence" value="ECO:0007669"/>
    <property type="project" value="UniProtKB-UniRule"/>
</dbReference>
<dbReference type="GO" id="GO:0004642">
    <property type="term" value="F:phosphoribosylformylglycinamidine synthase activity"/>
    <property type="evidence" value="ECO:0007669"/>
    <property type="project" value="UniProtKB-UniRule"/>
</dbReference>
<dbReference type="GO" id="GO:0006189">
    <property type="term" value="P:'de novo' IMP biosynthetic process"/>
    <property type="evidence" value="ECO:0007669"/>
    <property type="project" value="UniProtKB-UniRule"/>
</dbReference>
<dbReference type="CDD" id="cd02203">
    <property type="entry name" value="PurL_repeat1"/>
    <property type="match status" value="1"/>
</dbReference>
<dbReference type="CDD" id="cd02204">
    <property type="entry name" value="PurL_repeat2"/>
    <property type="match status" value="1"/>
</dbReference>
<dbReference type="FunFam" id="3.30.1330.10:FF:000004">
    <property type="entry name" value="Phosphoribosylformylglycinamidine synthase subunit PurL"/>
    <property type="match status" value="1"/>
</dbReference>
<dbReference type="Gene3D" id="3.90.650.10">
    <property type="entry name" value="PurM-like C-terminal domain"/>
    <property type="match status" value="2"/>
</dbReference>
<dbReference type="Gene3D" id="3.30.1330.10">
    <property type="entry name" value="PurM-like, N-terminal domain"/>
    <property type="match status" value="2"/>
</dbReference>
<dbReference type="HAMAP" id="MF_00420">
    <property type="entry name" value="PurL_2"/>
    <property type="match status" value="1"/>
</dbReference>
<dbReference type="InterPro" id="IPR010074">
    <property type="entry name" value="PRibForGlyAmidine_synth_PurL"/>
</dbReference>
<dbReference type="InterPro" id="IPR041609">
    <property type="entry name" value="PurL_linker"/>
</dbReference>
<dbReference type="InterPro" id="IPR010918">
    <property type="entry name" value="PurM-like_C_dom"/>
</dbReference>
<dbReference type="InterPro" id="IPR036676">
    <property type="entry name" value="PurM-like_C_sf"/>
</dbReference>
<dbReference type="InterPro" id="IPR016188">
    <property type="entry name" value="PurM-like_N"/>
</dbReference>
<dbReference type="InterPro" id="IPR036921">
    <property type="entry name" value="PurM-like_N_sf"/>
</dbReference>
<dbReference type="NCBIfam" id="TIGR01736">
    <property type="entry name" value="FGAM_synth_II"/>
    <property type="match status" value="1"/>
</dbReference>
<dbReference type="NCBIfam" id="NF002290">
    <property type="entry name" value="PRK01213.1"/>
    <property type="match status" value="1"/>
</dbReference>
<dbReference type="PANTHER" id="PTHR43555">
    <property type="entry name" value="PHOSPHORIBOSYLFORMYLGLYCINAMIDINE SYNTHASE SUBUNIT PURL"/>
    <property type="match status" value="1"/>
</dbReference>
<dbReference type="PANTHER" id="PTHR43555:SF1">
    <property type="entry name" value="PHOSPHORIBOSYLFORMYLGLYCINAMIDINE SYNTHASE SUBUNIT PURL"/>
    <property type="match status" value="1"/>
</dbReference>
<dbReference type="Pfam" id="PF00586">
    <property type="entry name" value="AIRS"/>
    <property type="match status" value="2"/>
</dbReference>
<dbReference type="Pfam" id="PF02769">
    <property type="entry name" value="AIRS_C"/>
    <property type="match status" value="2"/>
</dbReference>
<dbReference type="Pfam" id="PF18072">
    <property type="entry name" value="FGAR-AT_linker"/>
    <property type="match status" value="1"/>
</dbReference>
<dbReference type="PIRSF" id="PIRSF001587">
    <property type="entry name" value="FGAM_synthase_II"/>
    <property type="match status" value="1"/>
</dbReference>
<dbReference type="SUPFAM" id="SSF56042">
    <property type="entry name" value="PurM C-terminal domain-like"/>
    <property type="match status" value="2"/>
</dbReference>
<dbReference type="SUPFAM" id="SSF55326">
    <property type="entry name" value="PurM N-terminal domain-like"/>
    <property type="match status" value="2"/>
</dbReference>
<gene>
    <name evidence="1" type="primary">purL</name>
    <name type="ordered locus">NIS_0895</name>
</gene>
<keyword id="KW-0067">ATP-binding</keyword>
<keyword id="KW-0963">Cytoplasm</keyword>
<keyword id="KW-0436">Ligase</keyword>
<keyword id="KW-0460">Magnesium</keyword>
<keyword id="KW-0479">Metal-binding</keyword>
<keyword id="KW-0547">Nucleotide-binding</keyword>
<keyword id="KW-0658">Purine biosynthesis</keyword>
<keyword id="KW-1185">Reference proteome</keyword>
<reference key="1">
    <citation type="journal article" date="2007" name="Proc. Natl. Acad. Sci. U.S.A.">
        <title>Deep-sea vent epsilon-proteobacterial genomes provide insights into emergence of pathogens.</title>
        <authorList>
            <person name="Nakagawa S."/>
            <person name="Takaki Y."/>
            <person name="Shimamura S."/>
            <person name="Reysenbach A.-L."/>
            <person name="Takai K."/>
            <person name="Horikoshi K."/>
        </authorList>
    </citation>
    <scope>NUCLEOTIDE SEQUENCE [LARGE SCALE GENOMIC DNA]</scope>
    <source>
        <strain>SB155-2</strain>
    </source>
</reference>
<organism>
    <name type="scientific">Nitratiruptor sp. (strain SB155-2)</name>
    <dbReference type="NCBI Taxonomy" id="387092"/>
    <lineage>
        <taxon>Bacteria</taxon>
        <taxon>Pseudomonadati</taxon>
        <taxon>Campylobacterota</taxon>
        <taxon>Epsilonproteobacteria</taxon>
        <taxon>Nautiliales</taxon>
        <taxon>Nitratiruptoraceae</taxon>
        <taxon>Nitratiruptor</taxon>
    </lineage>
</organism>
<protein>
    <recommendedName>
        <fullName evidence="1">Phosphoribosylformylglycinamidine synthase subunit PurL</fullName>
        <shortName evidence="1">FGAM synthase</shortName>
        <ecNumber evidence="1">6.3.5.3</ecNumber>
    </recommendedName>
    <alternativeName>
        <fullName evidence="1">Formylglycinamide ribonucleotide amidotransferase subunit II</fullName>
        <shortName evidence="1">FGAR amidotransferase II</shortName>
        <shortName evidence="1">FGAR-AT II</shortName>
    </alternativeName>
    <alternativeName>
        <fullName evidence="1">Glutamine amidotransferase PurL</fullName>
    </alternativeName>
    <alternativeName>
        <fullName evidence="1">Phosphoribosylformylglycinamidine synthase subunit II</fullName>
    </alternativeName>
</protein>
<comment type="function">
    <text evidence="1">Part of the phosphoribosylformylglycinamidine synthase complex involved in the purines biosynthetic pathway. Catalyzes the ATP-dependent conversion of formylglycinamide ribonucleotide (FGAR) and glutamine to yield formylglycinamidine ribonucleotide (FGAM) and glutamate. The FGAM synthase complex is composed of three subunits. PurQ produces an ammonia molecule by converting glutamine to glutamate. PurL transfers the ammonia molecule to FGAR to form FGAM in an ATP-dependent manner. PurS interacts with PurQ and PurL and is thought to assist in the transfer of the ammonia molecule from PurQ to PurL.</text>
</comment>
<comment type="catalytic activity">
    <reaction evidence="1">
        <text>N(2)-formyl-N(1)-(5-phospho-beta-D-ribosyl)glycinamide + L-glutamine + ATP + H2O = 2-formamido-N(1)-(5-O-phospho-beta-D-ribosyl)acetamidine + L-glutamate + ADP + phosphate + H(+)</text>
        <dbReference type="Rhea" id="RHEA:17129"/>
        <dbReference type="ChEBI" id="CHEBI:15377"/>
        <dbReference type="ChEBI" id="CHEBI:15378"/>
        <dbReference type="ChEBI" id="CHEBI:29985"/>
        <dbReference type="ChEBI" id="CHEBI:30616"/>
        <dbReference type="ChEBI" id="CHEBI:43474"/>
        <dbReference type="ChEBI" id="CHEBI:58359"/>
        <dbReference type="ChEBI" id="CHEBI:147286"/>
        <dbReference type="ChEBI" id="CHEBI:147287"/>
        <dbReference type="ChEBI" id="CHEBI:456216"/>
        <dbReference type="EC" id="6.3.5.3"/>
    </reaction>
</comment>
<comment type="pathway">
    <text evidence="1">Purine metabolism; IMP biosynthesis via de novo pathway; 5-amino-1-(5-phospho-D-ribosyl)imidazole from N(2)-formyl-N(1)-(5-phospho-D-ribosyl)glycinamide: step 1/2.</text>
</comment>
<comment type="subunit">
    <text evidence="1">Monomer. Part of the FGAM synthase complex composed of 1 PurL, 1 PurQ and 2 PurS subunits.</text>
</comment>
<comment type="subcellular location">
    <subcellularLocation>
        <location evidence="1">Cytoplasm</location>
    </subcellularLocation>
</comment>
<comment type="similarity">
    <text evidence="1">Belongs to the FGAMS family.</text>
</comment>
<accession>A6Q3E8</accession>
<proteinExistence type="inferred from homology"/>